<feature type="chain" id="PRO_0000430494" description="Bark lectin isoform 1">
    <location>
        <begin position="1"/>
        <end position="165"/>
    </location>
</feature>
<feature type="glycosylation site" description="N-linked (GlcNAc...) asparagine" evidence="3">
    <location>
        <position position="27"/>
    </location>
</feature>
<feature type="glycosylation site" description="N-linked (GlcNAc...) asparagine" evidence="3">
    <location>
        <position position="57"/>
    </location>
</feature>
<feature type="disulfide bond" evidence="3">
    <location>
        <begin position="33"/>
        <end position="80"/>
    </location>
</feature>
<feature type="disulfide bond" evidence="3">
    <location>
        <begin position="126"/>
        <end position="133"/>
    </location>
</feature>
<feature type="strand" evidence="10">
    <location>
        <begin position="8"/>
        <end position="12"/>
    </location>
</feature>
<feature type="strand" evidence="10">
    <location>
        <begin position="19"/>
        <end position="21"/>
    </location>
</feature>
<feature type="helix" evidence="10">
    <location>
        <begin position="22"/>
        <end position="26"/>
    </location>
</feature>
<feature type="strand" evidence="10">
    <location>
        <begin position="37"/>
        <end position="40"/>
    </location>
</feature>
<feature type="turn" evidence="10">
    <location>
        <begin position="42"/>
        <end position="45"/>
    </location>
</feature>
<feature type="strand" evidence="10">
    <location>
        <begin position="51"/>
        <end position="57"/>
    </location>
</feature>
<feature type="strand" evidence="10">
    <location>
        <begin position="69"/>
        <end position="73"/>
    </location>
</feature>
<feature type="strand" evidence="10">
    <location>
        <begin position="80"/>
        <end position="82"/>
    </location>
</feature>
<feature type="strand" evidence="10">
    <location>
        <begin position="87"/>
        <end position="91"/>
    </location>
</feature>
<feature type="turn" evidence="10">
    <location>
        <begin position="92"/>
        <end position="95"/>
    </location>
</feature>
<feature type="strand" evidence="10">
    <location>
        <begin position="96"/>
        <end position="101"/>
    </location>
</feature>
<feature type="strand" evidence="10">
    <location>
        <begin position="112"/>
        <end position="117"/>
    </location>
</feature>
<feature type="strand" evidence="10">
    <location>
        <begin position="120"/>
        <end position="125"/>
    </location>
</feature>
<feature type="helix" evidence="10">
    <location>
        <begin position="127"/>
        <end position="129"/>
    </location>
</feature>
<feature type="strand" evidence="10">
    <location>
        <begin position="134"/>
        <end position="139"/>
    </location>
</feature>
<feature type="turn" evidence="11">
    <location>
        <begin position="141"/>
        <end position="145"/>
    </location>
</feature>
<feature type="strand" evidence="10">
    <location>
        <begin position="148"/>
        <end position="153"/>
    </location>
</feature>
<feature type="strand" evidence="10">
    <location>
        <begin position="158"/>
        <end position="162"/>
    </location>
</feature>
<reference evidence="6 9" key="1">
    <citation type="journal article" date="2013" name="PLoS ONE">
        <title>Crystal structure of Crataeva tapia bark protein (CrataBL) and its effect in human prostate cancer cell lines.</title>
        <authorList>
            <person name="Ferreira R.D."/>
            <person name="Zhou D."/>
            <person name="Ferreira J.G."/>
            <person name="Silva M.C."/>
            <person name="Silva-Lucca R.A."/>
            <person name="Mentele R."/>
            <person name="Paredes-Gamero E.J."/>
            <person name="Bertolin T.C."/>
            <person name="Dos Santos Correia M.T."/>
            <person name="Paiva P.M."/>
            <person name="Gustchina A."/>
            <person name="Wlodawer A."/>
            <person name="Oliva M.L."/>
        </authorList>
    </citation>
    <scope>PROTEIN SEQUENCE</scope>
    <scope>FUNCTION</scope>
    <scope>SUBUNIT</scope>
    <scope>GLYCOSYLATION AT ASN-27 AND ASN-57</scope>
    <scope>DISULFIDE BONDS</scope>
    <scope>X-RAY CRYSTALLOGRAPHY (1.50 ANGSTROMS)</scope>
    <source>
        <tissue evidence="3">Bark</tissue>
    </source>
</reference>
<reference evidence="6" key="2">
    <citation type="journal article" date="2012" name="Plant Sci.">
        <title>Crataeva tapia bark lectin is an affinity adsorbent and insecticidal agent.</title>
        <authorList>
            <person name="Araujo R.M."/>
            <person name="Ferreira R.S."/>
            <person name="Napoleao T.H."/>
            <person name="Carneiro-da-Cunha M."/>
            <person name="Coelho L.C."/>
            <person name="Correia M.T."/>
            <person name="Oliva M.L."/>
            <person name="Paiva P.M."/>
        </authorList>
    </citation>
    <scope>PROTEIN SEQUENCE OF 2-19</scope>
    <scope>FUNCTION</scope>
    <scope>BIOPHYSICOCHEMICAL PROPERTIES</scope>
    <scope>SUBUNIT</scope>
    <scope>GLYCOSYLATION</scope>
    <scope>TOXIC DOSE</scope>
    <source>
        <tissue evidence="2">Bark</tissue>
    </source>
</reference>
<protein>
    <recommendedName>
        <fullName evidence="4 5">Bark lectin isoform 1</fullName>
        <shortName evidence="5 9">CrataBL</shortName>
        <shortName evidence="4 5">CrataBL-form I</shortName>
    </recommendedName>
</protein>
<name>LECB1_CRATA</name>
<keyword id="KW-0002">3D-structure</keyword>
<keyword id="KW-0903">Direct protein sequencing</keyword>
<keyword id="KW-1015">Disulfide bond</keyword>
<keyword id="KW-0325">Glycoprotein</keyword>
<keyword id="KW-0348">Hemagglutinin</keyword>
<keyword id="KW-0430">Lectin</keyword>
<keyword id="KW-0646">Protease inhibitor</keyword>
<keyword id="KW-0722">Serine protease inhibitor</keyword>
<keyword id="KW-0800">Toxin</keyword>
<comment type="function">
    <text evidence="2 3">Glucose and N-acetylglucosamine binding lectin. Has hemagglutinating activity against human and rabbit erythrocytes which does not require divalent cations. Inhibits factor Xa and, to a lesser extent, trypsin. Does not inhibit neutrophil elastase, human plasma kallikrein, papain, human plasmin, porcine pancreatic kallikrein and bovin chymotrypsin. Has insecticidal activity against the termite species N.corniger. Induces apoptosis in prostrate cancer cell lines DU145 and PC3.</text>
</comment>
<comment type="biophysicochemical properties">
    <temperatureDependence>
        <text evidence="2">Hemagglutinating activity is stable between 30 and 60 degrees Celsius.</text>
    </temperatureDependence>
</comment>
<comment type="subunit">
    <text evidence="2 3">Dimer.</text>
</comment>
<comment type="toxic dose">
    <text evidence="2">LD(50) is 0.45 mg/ml against the termite species N.corniger.</text>
</comment>
<comment type="similarity">
    <text evidence="1">Belongs to the protease inhibitor I3 (leguminous Kunitz-type inhibitor) family.</text>
</comment>
<comment type="caution">
    <text evidence="6 7 8">Characterization did not differentiate between the two isoforms determined by protein sequencing (PubMed:22195573, PubMed:23823708).</text>
</comment>
<evidence type="ECO:0000255" key="1"/>
<evidence type="ECO:0000269" key="2">
    <source>
    </source>
</evidence>
<evidence type="ECO:0000269" key="3">
    <source>
    </source>
</evidence>
<evidence type="ECO:0000303" key="4">
    <source>
    </source>
</evidence>
<evidence type="ECO:0000303" key="5">
    <source>
    </source>
</evidence>
<evidence type="ECO:0000305" key="6"/>
<evidence type="ECO:0000305" key="7">
    <source>
    </source>
</evidence>
<evidence type="ECO:0000305" key="8">
    <source>
    </source>
</evidence>
<evidence type="ECO:0000312" key="9">
    <source>
        <dbReference type="PDB" id="4IHZ"/>
    </source>
</evidence>
<evidence type="ECO:0007829" key="10">
    <source>
        <dbReference type="PDB" id="4IHZ"/>
    </source>
</evidence>
<evidence type="ECO:0007829" key="11">
    <source>
        <dbReference type="PDB" id="4II0"/>
    </source>
</evidence>
<dbReference type="PDB" id="4IHZ">
    <property type="method" value="X-ray"/>
    <property type="resolution" value="1.50 A"/>
    <property type="chains" value="A/B=1-165"/>
</dbReference>
<dbReference type="PDB" id="4II0">
    <property type="method" value="X-ray"/>
    <property type="resolution" value="1.75 A"/>
    <property type="chains" value="A/B=1-165"/>
</dbReference>
<dbReference type="PDBsum" id="4IHZ"/>
<dbReference type="PDBsum" id="4II0"/>
<dbReference type="SMR" id="U3KRG0"/>
<dbReference type="iPTMnet" id="U3KRG0"/>
<dbReference type="EvolutionaryTrace" id="U3KRG0"/>
<dbReference type="GO" id="GO:0030246">
    <property type="term" value="F:carbohydrate binding"/>
    <property type="evidence" value="ECO:0007669"/>
    <property type="project" value="UniProtKB-KW"/>
</dbReference>
<dbReference type="GO" id="GO:0004867">
    <property type="term" value="F:serine-type endopeptidase inhibitor activity"/>
    <property type="evidence" value="ECO:0007669"/>
    <property type="project" value="UniProtKB-KW"/>
</dbReference>
<dbReference type="GO" id="GO:0090729">
    <property type="term" value="F:toxin activity"/>
    <property type="evidence" value="ECO:0007669"/>
    <property type="project" value="UniProtKB-KW"/>
</dbReference>
<dbReference type="CDD" id="cd23374">
    <property type="entry name" value="beta-trefoil_STI_CrataBL-like"/>
    <property type="match status" value="1"/>
</dbReference>
<dbReference type="Gene3D" id="2.80.10.50">
    <property type="match status" value="1"/>
</dbReference>
<dbReference type="InterPro" id="IPR011065">
    <property type="entry name" value="Kunitz_inhibitor_STI-like_sf"/>
</dbReference>
<dbReference type="InterPro" id="IPR002160">
    <property type="entry name" value="Prot_inh_Kunz-lg"/>
</dbReference>
<dbReference type="PANTHER" id="PTHR33107">
    <property type="entry name" value="KUNITZ TRYPSIN INHIBITOR 2"/>
    <property type="match status" value="1"/>
</dbReference>
<dbReference type="PANTHER" id="PTHR33107:SF89">
    <property type="entry name" value="KUNITZ TRYPSIN INHIBITOR 2"/>
    <property type="match status" value="1"/>
</dbReference>
<dbReference type="Pfam" id="PF00197">
    <property type="entry name" value="Kunitz_legume"/>
    <property type="match status" value="1"/>
</dbReference>
<dbReference type="SMART" id="SM00452">
    <property type="entry name" value="STI"/>
    <property type="match status" value="1"/>
</dbReference>
<dbReference type="SUPFAM" id="SSF50386">
    <property type="entry name" value="STI-like"/>
    <property type="match status" value="1"/>
</dbReference>
<proteinExistence type="evidence at protein level"/>
<organism>
    <name type="scientific">Crateva tapia</name>
    <name type="common">Garlic-pear tree</name>
    <name type="synonym">Crataeva tapia</name>
    <dbReference type="NCBI Taxonomy" id="202635"/>
    <lineage>
        <taxon>Eukaryota</taxon>
        <taxon>Viridiplantae</taxon>
        <taxon>Streptophyta</taxon>
        <taxon>Embryophyta</taxon>
        <taxon>Tracheophyta</taxon>
        <taxon>Spermatophyta</taxon>
        <taxon>Magnoliopsida</taxon>
        <taxon>eudicotyledons</taxon>
        <taxon>Gunneridae</taxon>
        <taxon>Pentapetalae</taxon>
        <taxon>rosids</taxon>
        <taxon>malvids</taxon>
        <taxon>Brassicales</taxon>
        <taxon>Capparaceae</taxon>
        <taxon>Crateva</taxon>
    </lineage>
</organism>
<sequence>AILTGVPYYILPSTSRAGFSPDNLRKNTSQPSCPLDLITQLRFPRRIGVPVIFTPQNSSLKVVPLSHNLNIHTCSDLWFCPESKIWTVKSSSIHRGLVVTTGGTFRSLGSWFRIERHGDSYKLVHCPRGSTPCRDVGIETVGGGGRRYLAPRDRPLAVRFTRASG</sequence>
<accession>U3KRG0</accession>
<accession>B8WI86</accession>